<keyword id="KW-0007">Acetylation</keyword>
<keyword id="KW-0024">Alternative initiation</keyword>
<keyword id="KW-0025">Alternative splicing</keyword>
<keyword id="KW-0037">Angiogenesis</keyword>
<keyword id="KW-0965">Cell junction</keyword>
<keyword id="KW-0963">Cytoplasm</keyword>
<keyword id="KW-0341">Growth regulation</keyword>
<keyword id="KW-0496">Mitochondrion</keyword>
<keyword id="KW-0597">Phosphoprotein</keyword>
<keyword id="KW-1185">Reference proteome</keyword>
<keyword id="KW-0727">SH2 domain</keyword>
<evidence type="ECO:0000250" key="1"/>
<evidence type="ECO:0000250" key="2">
    <source>
        <dbReference type="UniProtKB" id="P29353"/>
    </source>
</evidence>
<evidence type="ECO:0000250" key="3">
    <source>
        <dbReference type="UniProtKB" id="Q5M824"/>
    </source>
</evidence>
<evidence type="ECO:0000255" key="4">
    <source>
        <dbReference type="PROSITE-ProRule" id="PRU00148"/>
    </source>
</evidence>
<evidence type="ECO:0000255" key="5">
    <source>
        <dbReference type="PROSITE-ProRule" id="PRU00191"/>
    </source>
</evidence>
<evidence type="ECO:0000256" key="6">
    <source>
        <dbReference type="SAM" id="MobiDB-lite"/>
    </source>
</evidence>
<evidence type="ECO:0000269" key="7">
    <source>
    </source>
</evidence>
<evidence type="ECO:0000269" key="8">
    <source>
    </source>
</evidence>
<evidence type="ECO:0000269" key="9">
    <source>
    </source>
</evidence>
<evidence type="ECO:0000269" key="10">
    <source>
    </source>
</evidence>
<evidence type="ECO:0000269" key="11">
    <source>
    </source>
</evidence>
<evidence type="ECO:0000269" key="12">
    <source>
    </source>
</evidence>
<evidence type="ECO:0000269" key="13">
    <source>
    </source>
</evidence>
<evidence type="ECO:0000269" key="14">
    <source>
    </source>
</evidence>
<evidence type="ECO:0000269" key="15">
    <source>
    </source>
</evidence>
<evidence type="ECO:0000269" key="16">
    <source>
    </source>
</evidence>
<evidence type="ECO:0000269" key="17">
    <source>
    </source>
</evidence>
<evidence type="ECO:0000269" key="18">
    <source>
    </source>
</evidence>
<evidence type="ECO:0000269" key="19">
    <source>
    </source>
</evidence>
<evidence type="ECO:0000269" key="20">
    <source>
    </source>
</evidence>
<evidence type="ECO:0000269" key="21">
    <source>
    </source>
</evidence>
<evidence type="ECO:0000269" key="22">
    <source>
    </source>
</evidence>
<evidence type="ECO:0000303" key="23">
    <source>
    </source>
</evidence>
<evidence type="ECO:0000303" key="24">
    <source>
    </source>
</evidence>
<evidence type="ECO:0000303" key="25">
    <source>
    </source>
</evidence>
<evidence type="ECO:0000305" key="26"/>
<evidence type="ECO:0007744" key="27">
    <source>
    </source>
</evidence>
<evidence type="ECO:0007744" key="28">
    <source>
    </source>
</evidence>
<evidence type="ECO:0007744" key="29">
    <source>
    </source>
</evidence>
<evidence type="ECO:0007744" key="30">
    <source>
    </source>
</evidence>
<organism>
    <name type="scientific">Mus musculus</name>
    <name type="common">Mouse</name>
    <dbReference type="NCBI Taxonomy" id="10090"/>
    <lineage>
        <taxon>Eukaryota</taxon>
        <taxon>Metazoa</taxon>
        <taxon>Chordata</taxon>
        <taxon>Craniata</taxon>
        <taxon>Vertebrata</taxon>
        <taxon>Euteleostomi</taxon>
        <taxon>Mammalia</taxon>
        <taxon>Eutheria</taxon>
        <taxon>Euarchontoglires</taxon>
        <taxon>Glires</taxon>
        <taxon>Rodentia</taxon>
        <taxon>Myomorpha</taxon>
        <taxon>Muroidea</taxon>
        <taxon>Muridae</taxon>
        <taxon>Murinae</taxon>
        <taxon>Mus</taxon>
        <taxon>Mus</taxon>
    </lineage>
</organism>
<feature type="chain" id="PRO_0000022339" description="SHC-transforming protein 1">
    <location>
        <begin position="1"/>
        <end position="579"/>
    </location>
</feature>
<feature type="domain" description="PID" evidence="4">
    <location>
        <begin position="156"/>
        <end position="339"/>
    </location>
</feature>
<feature type="domain" description="SH2" evidence="5">
    <location>
        <begin position="484"/>
        <end position="575"/>
    </location>
</feature>
<feature type="region of interest" description="Disordered" evidence="6">
    <location>
        <begin position="1"/>
        <end position="137"/>
    </location>
</feature>
<feature type="region of interest" description="Disordered" evidence="6">
    <location>
        <begin position="337"/>
        <end position="357"/>
    </location>
</feature>
<feature type="region of interest" description="CH1">
    <location>
        <begin position="340"/>
        <end position="483"/>
    </location>
</feature>
<feature type="region of interest" description="Disordered" evidence="6">
    <location>
        <begin position="432"/>
        <end position="451"/>
    </location>
</feature>
<feature type="compositionally biased region" description="Low complexity" evidence="6">
    <location>
        <begin position="16"/>
        <end position="44"/>
    </location>
</feature>
<feature type="modified residue" description="N-acetylmethionine" evidence="2">
    <location>
        <position position="1"/>
    </location>
</feature>
<feature type="modified residue" description="Phosphoserine" evidence="21">
    <location>
        <position position="36"/>
    </location>
</feature>
<feature type="modified residue" description="Phosphoserine" evidence="28">
    <location>
        <position position="139"/>
    </location>
</feature>
<feature type="modified residue" description="N6-acetyllysine" evidence="30">
    <location>
        <position position="154"/>
    </location>
</feature>
<feature type="modified residue" description="Phosphotyrosine" evidence="2">
    <location>
        <position position="349"/>
    </location>
</feature>
<feature type="modified residue" description="Phosphotyrosine" evidence="2">
    <location>
        <position position="350"/>
    </location>
</feature>
<feature type="modified residue" description="Phosphotyrosine" evidence="27 28 29">
    <location>
        <position position="423"/>
    </location>
</feature>
<feature type="modified residue" description="Phosphoserine" evidence="2">
    <location>
        <position position="449"/>
    </location>
</feature>
<feature type="splice variant" id="VSP_018792" description="In isoform p47Shc." evidence="26">
    <location>
        <begin position="1"/>
        <end position="155"/>
    </location>
</feature>
<feature type="splice variant" id="VSP_018791" description="In isoform p52Shc." evidence="23 24 25">
    <location>
        <begin position="1"/>
        <end position="110"/>
    </location>
</feature>
<protein>
    <recommendedName>
        <fullName>SHC-transforming protein 1</fullName>
    </recommendedName>
    <alternativeName>
        <fullName>SHC-transforming protein A</fullName>
    </alternativeName>
    <alternativeName>
        <fullName>Src homology 2 domain-containing-transforming protein C1</fullName>
        <shortName>SH2 domain protein C1</shortName>
    </alternativeName>
</protein>
<dbReference type="EMBL" id="U46956">
    <property type="protein sequence ID" value="AAA91777.2"/>
    <property type="molecule type" value="Genomic_DNA"/>
</dbReference>
<dbReference type="EMBL" id="U15784">
    <property type="protein sequence ID" value="AAC52146.1"/>
    <property type="molecule type" value="mRNA"/>
</dbReference>
<dbReference type="EMBL" id="AK049357">
    <property type="protein sequence ID" value="BAC33706.1"/>
    <property type="molecule type" value="mRNA"/>
</dbReference>
<dbReference type="EMBL" id="AK155158">
    <property type="protein sequence ID" value="BAE33083.1"/>
    <property type="molecule type" value="mRNA"/>
</dbReference>
<dbReference type="EMBL" id="BC036172">
    <property type="protein sequence ID" value="AAH36172.1"/>
    <property type="molecule type" value="mRNA"/>
</dbReference>
<dbReference type="EMBL" id="AF455140">
    <property type="protein sequence ID" value="AAM61857.1"/>
    <property type="molecule type" value="Genomic_DNA"/>
</dbReference>
<dbReference type="EMBL" id="AF455140">
    <property type="protein sequence ID" value="AAM61858.1"/>
    <property type="molecule type" value="Genomic_DNA"/>
</dbReference>
<dbReference type="CCDS" id="CCDS17508.1">
    <molecule id="P98083-2"/>
</dbReference>
<dbReference type="CCDS" id="CCDS50962.1">
    <molecule id="P98083-1"/>
</dbReference>
<dbReference type="PIR" id="A55484">
    <property type="entry name" value="A55484"/>
</dbReference>
<dbReference type="RefSeq" id="NP_001106802.1">
    <molecule id="P98083-1"/>
    <property type="nucleotide sequence ID" value="NM_001113331.2"/>
</dbReference>
<dbReference type="RefSeq" id="NP_035498.2">
    <molecule id="P98083-2"/>
    <property type="nucleotide sequence ID" value="NM_011368.5"/>
</dbReference>
<dbReference type="BMRB" id="P98083"/>
<dbReference type="SMR" id="P98083"/>
<dbReference type="BioGRID" id="203215">
    <property type="interactions" value="35"/>
</dbReference>
<dbReference type="CORUM" id="P98083"/>
<dbReference type="DIP" id="DIP-271N"/>
<dbReference type="FunCoup" id="P98083">
    <property type="interactions" value="3385"/>
</dbReference>
<dbReference type="IntAct" id="P98083">
    <property type="interactions" value="27"/>
</dbReference>
<dbReference type="MINT" id="P98083"/>
<dbReference type="STRING" id="10090.ENSMUSP00000091940"/>
<dbReference type="iPTMnet" id="P98083"/>
<dbReference type="PhosphoSitePlus" id="P98083"/>
<dbReference type="jPOST" id="P98083"/>
<dbReference type="PaxDb" id="10090-ENSMUSP00000091940"/>
<dbReference type="PeptideAtlas" id="P98083"/>
<dbReference type="ProteomicsDB" id="261225">
    <molecule id="P98083-1"/>
</dbReference>
<dbReference type="ProteomicsDB" id="261226">
    <molecule id="P98083-2"/>
</dbReference>
<dbReference type="ProteomicsDB" id="261227">
    <molecule id="P98083-3"/>
</dbReference>
<dbReference type="Pumba" id="P98083"/>
<dbReference type="Antibodypedia" id="731">
    <property type="antibodies" value="1179 antibodies from 45 providers"/>
</dbReference>
<dbReference type="DNASU" id="20416"/>
<dbReference type="Ensembl" id="ENSMUST00000039110.12">
    <molecule id="P98083-2"/>
    <property type="protein sequence ID" value="ENSMUSP00000035361.6"/>
    <property type="gene ID" value="ENSMUSG00000042626.14"/>
</dbReference>
<dbReference type="Ensembl" id="ENSMUST00000094378.10">
    <molecule id="P98083-1"/>
    <property type="protein sequence ID" value="ENSMUSP00000091940.4"/>
    <property type="gene ID" value="ENSMUSG00000042626.14"/>
</dbReference>
<dbReference type="Ensembl" id="ENSMUST00000107417.9">
    <molecule id="P98083-3"/>
    <property type="protein sequence ID" value="ENSMUSP00000103040.3"/>
    <property type="gene ID" value="ENSMUSG00000042626.14"/>
</dbReference>
<dbReference type="Ensembl" id="ENSMUST00000191485.7">
    <molecule id="P98083-2"/>
    <property type="protein sequence ID" value="ENSMUSP00000140336.2"/>
    <property type="gene ID" value="ENSMUSG00000042626.14"/>
</dbReference>
<dbReference type="GeneID" id="20416"/>
<dbReference type="KEGG" id="mmu:20416"/>
<dbReference type="UCSC" id="uc008pzm.2">
    <molecule id="P98083-1"/>
    <property type="organism name" value="mouse"/>
</dbReference>
<dbReference type="AGR" id="MGI:98296"/>
<dbReference type="CTD" id="6464"/>
<dbReference type="MGI" id="MGI:98296">
    <property type="gene designation" value="Shc1"/>
</dbReference>
<dbReference type="VEuPathDB" id="HostDB:ENSMUSG00000042626"/>
<dbReference type="eggNOG" id="KOG3697">
    <property type="taxonomic scope" value="Eukaryota"/>
</dbReference>
<dbReference type="GeneTree" id="ENSGT00950000182870"/>
<dbReference type="HOGENOM" id="CLU_029532_2_0_1"/>
<dbReference type="InParanoid" id="P98083"/>
<dbReference type="OMA" id="IWFHGSV"/>
<dbReference type="OrthoDB" id="9938362at2759"/>
<dbReference type="PhylomeDB" id="P98083"/>
<dbReference type="TreeFam" id="TF315807"/>
<dbReference type="Reactome" id="R-MMU-1250196">
    <molecule id="P98083-3"/>
    <property type="pathway name" value="SHC1 events in ERBB2 signaling"/>
</dbReference>
<dbReference type="Reactome" id="R-MMU-1250347">
    <molecule id="P98083-3"/>
    <property type="pathway name" value="SHC1 events in ERBB4 signaling"/>
</dbReference>
<dbReference type="Reactome" id="R-MMU-167044">
    <molecule id="P98083-3"/>
    <property type="pathway name" value="Signalling to RAS"/>
</dbReference>
<dbReference type="Reactome" id="R-MMU-180336">
    <molecule id="P98083-3"/>
    <property type="pathway name" value="SHC1 events in EGFR signaling"/>
</dbReference>
<dbReference type="Reactome" id="R-MMU-201556">
    <molecule id="P98083-3"/>
    <property type="pathway name" value="Signaling by ALK"/>
</dbReference>
<dbReference type="Reactome" id="R-MMU-210993">
    <molecule id="P98083-3"/>
    <property type="pathway name" value="Tie2 Signaling"/>
</dbReference>
<dbReference type="Reactome" id="R-MMU-2424491">
    <molecule id="P98083-3"/>
    <property type="pathway name" value="DAP12 signaling"/>
</dbReference>
<dbReference type="Reactome" id="R-MMU-2428933">
    <molecule id="P98083-3"/>
    <property type="pathway name" value="SHC-related events triggered by IGF1R"/>
</dbReference>
<dbReference type="Reactome" id="R-MMU-2730905">
    <molecule id="P98083-3"/>
    <property type="pathway name" value="Role of LAT2/NTAL/LAB on calcium mobilization"/>
</dbReference>
<dbReference type="Reactome" id="R-MMU-2871796">
    <molecule id="P98083-3"/>
    <property type="pathway name" value="FCERI mediated MAPK activation"/>
</dbReference>
<dbReference type="Reactome" id="R-MMU-2871809">
    <molecule id="P98083-3"/>
    <property type="pathway name" value="FCERI mediated Ca+2 mobilization"/>
</dbReference>
<dbReference type="Reactome" id="R-MMU-354192">
    <molecule id="P98083-3"/>
    <property type="pathway name" value="Integrin signaling"/>
</dbReference>
<dbReference type="Reactome" id="R-MMU-512988">
    <molecule id="P98083-3"/>
    <property type="pathway name" value="Interleukin-3, Interleukin-5 and GM-CSF signaling"/>
</dbReference>
<dbReference type="Reactome" id="R-MMU-5654688">
    <molecule id="P98083-3"/>
    <property type="pathway name" value="SHC-mediated cascade:FGFR1"/>
</dbReference>
<dbReference type="Reactome" id="R-MMU-5654699">
    <molecule id="P98083-3"/>
    <property type="pathway name" value="SHC-mediated cascade:FGFR2"/>
</dbReference>
<dbReference type="Reactome" id="R-MMU-5654704">
    <molecule id="P98083-3"/>
    <property type="pathway name" value="SHC-mediated cascade:FGFR3"/>
</dbReference>
<dbReference type="Reactome" id="R-MMU-5654719">
    <molecule id="P98083-3"/>
    <property type="pathway name" value="SHC-mediated cascade:FGFR4"/>
</dbReference>
<dbReference type="Reactome" id="R-MMU-5673001">
    <molecule id="P98083-3"/>
    <property type="pathway name" value="RAF/MAP kinase cascade"/>
</dbReference>
<dbReference type="Reactome" id="R-MMU-74749">
    <molecule id="P98083-3"/>
    <property type="pathway name" value="Signal attenuation"/>
</dbReference>
<dbReference type="Reactome" id="R-MMU-74751">
    <molecule id="P98083-3"/>
    <property type="pathway name" value="Insulin receptor signalling cascade"/>
</dbReference>
<dbReference type="Reactome" id="R-MMU-8851805">
    <molecule id="P98083-3"/>
    <property type="pathway name" value="MET activates RAS signaling"/>
</dbReference>
<dbReference type="Reactome" id="R-MMU-8853659">
    <molecule id="P98083-3"/>
    <property type="pathway name" value="RET signaling"/>
</dbReference>
<dbReference type="Reactome" id="R-MMU-8983432">
    <molecule id="P98083-3"/>
    <property type="pathway name" value="Interleukin-15 signaling"/>
</dbReference>
<dbReference type="Reactome" id="R-MMU-9009391">
    <molecule id="P98083-3"/>
    <property type="pathway name" value="Extra-nuclear estrogen signaling"/>
</dbReference>
<dbReference type="Reactome" id="R-MMU-9020558">
    <molecule id="P98083-3"/>
    <property type="pathway name" value="Interleukin-2 signaling"/>
</dbReference>
<dbReference type="Reactome" id="R-MMU-9027284">
    <molecule id="P98083-3"/>
    <property type="pathway name" value="Erythropoietin activates RAS"/>
</dbReference>
<dbReference type="Reactome" id="R-MMU-912526">
    <molecule id="P98083-3"/>
    <property type="pathway name" value="Interleukin receptor SHC signaling"/>
</dbReference>
<dbReference type="Reactome" id="R-MMU-9634597">
    <molecule id="P98083-3"/>
    <property type="pathway name" value="GPER1 signaling"/>
</dbReference>
<dbReference type="Reactome" id="R-MMU-9674555">
    <molecule id="P98083-3"/>
    <property type="pathway name" value="Signaling by CSF3 (G-CSF)"/>
</dbReference>
<dbReference type="Reactome" id="R-MMU-9842663">
    <molecule id="P98083-3"/>
    <property type="pathway name" value="Signaling by LTK"/>
</dbReference>
<dbReference type="BioGRID-ORCS" id="20416">
    <property type="hits" value="6 hits in 79 CRISPR screens"/>
</dbReference>
<dbReference type="ChiTaRS" id="Shc1">
    <property type="organism name" value="mouse"/>
</dbReference>
<dbReference type="PRO" id="PR:P98083"/>
<dbReference type="Proteomes" id="UP000000589">
    <property type="component" value="Chromosome 3"/>
</dbReference>
<dbReference type="RNAct" id="P98083">
    <property type="molecule type" value="protein"/>
</dbReference>
<dbReference type="Bgee" id="ENSMUSG00000042626">
    <property type="expression patterns" value="Expressed in lens of camera-type eye and 66 other cell types or tissues"/>
</dbReference>
<dbReference type="ExpressionAtlas" id="P98083">
    <property type="expression patterns" value="baseline and differential"/>
</dbReference>
<dbReference type="GO" id="GO:0005829">
    <property type="term" value="C:cytosol"/>
    <property type="evidence" value="ECO:0000304"/>
    <property type="project" value="Reactome"/>
</dbReference>
<dbReference type="GO" id="GO:0005925">
    <property type="term" value="C:focal adhesion"/>
    <property type="evidence" value="ECO:0007669"/>
    <property type="project" value="UniProtKB-SubCell"/>
</dbReference>
<dbReference type="GO" id="GO:0005759">
    <property type="term" value="C:mitochondrial matrix"/>
    <property type="evidence" value="ECO:0007669"/>
    <property type="project" value="UniProtKB-SubCell"/>
</dbReference>
<dbReference type="GO" id="GO:0005886">
    <property type="term" value="C:plasma membrane"/>
    <property type="evidence" value="ECO:0000250"/>
    <property type="project" value="UniProtKB"/>
</dbReference>
<dbReference type="GO" id="GO:0046875">
    <property type="term" value="F:ephrin receptor binding"/>
    <property type="evidence" value="ECO:0000353"/>
    <property type="project" value="UniProtKB"/>
</dbReference>
<dbReference type="GO" id="GO:0048408">
    <property type="term" value="F:epidermal growth factor binding"/>
    <property type="evidence" value="ECO:0000353"/>
    <property type="project" value="UniProtKB"/>
</dbReference>
<dbReference type="GO" id="GO:0042802">
    <property type="term" value="F:identical protein binding"/>
    <property type="evidence" value="ECO:0000353"/>
    <property type="project" value="IntAct"/>
</dbReference>
<dbReference type="GO" id="GO:0005158">
    <property type="term" value="F:insulin receptor binding"/>
    <property type="evidence" value="ECO:0007669"/>
    <property type="project" value="Ensembl"/>
</dbReference>
<dbReference type="GO" id="GO:0005159">
    <property type="term" value="F:insulin-like growth factor receptor binding"/>
    <property type="evidence" value="ECO:0007669"/>
    <property type="project" value="Ensembl"/>
</dbReference>
<dbReference type="GO" id="GO:0005168">
    <property type="term" value="F:neurotrophin TRKA receptor binding"/>
    <property type="evidence" value="ECO:0007669"/>
    <property type="project" value="Ensembl"/>
</dbReference>
<dbReference type="GO" id="GO:0001784">
    <property type="term" value="F:phosphotyrosine residue binding"/>
    <property type="evidence" value="ECO:0007669"/>
    <property type="project" value="Ensembl"/>
</dbReference>
<dbReference type="GO" id="GO:0030674">
    <property type="term" value="F:protein-macromolecule adaptor activity"/>
    <property type="evidence" value="ECO:0000314"/>
    <property type="project" value="MGI"/>
</dbReference>
<dbReference type="GO" id="GO:0030971">
    <property type="term" value="F:receptor tyrosine kinase binding"/>
    <property type="evidence" value="ECO:0000353"/>
    <property type="project" value="UniProtKB"/>
</dbReference>
<dbReference type="GO" id="GO:0005068">
    <property type="term" value="F:transmembrane receptor protein tyrosine kinase adaptor activity"/>
    <property type="evidence" value="ECO:0000314"/>
    <property type="project" value="MGI"/>
</dbReference>
<dbReference type="GO" id="GO:0030036">
    <property type="term" value="P:actin cytoskeleton organization"/>
    <property type="evidence" value="ECO:0000315"/>
    <property type="project" value="MGI"/>
</dbReference>
<dbReference type="GO" id="GO:0001525">
    <property type="term" value="P:angiogenesis"/>
    <property type="evidence" value="ECO:0000315"/>
    <property type="project" value="MGI"/>
</dbReference>
<dbReference type="GO" id="GO:0050853">
    <property type="term" value="P:B cell receptor signaling pathway"/>
    <property type="evidence" value="ECO:0000314"/>
    <property type="project" value="MGI"/>
</dbReference>
<dbReference type="GO" id="GO:0098609">
    <property type="term" value="P:cell-cell adhesion"/>
    <property type="evidence" value="ECO:0000315"/>
    <property type="project" value="MGI"/>
</dbReference>
<dbReference type="GO" id="GO:0071363">
    <property type="term" value="P:cellular response to growth factor stimulus"/>
    <property type="evidence" value="ECO:0000250"/>
    <property type="project" value="UniProtKB"/>
</dbReference>
<dbReference type="GO" id="GO:0042742">
    <property type="term" value="P:defense response to bacterium"/>
    <property type="evidence" value="ECO:0007669"/>
    <property type="project" value="Ensembl"/>
</dbReference>
<dbReference type="GO" id="GO:0007173">
    <property type="term" value="P:epidermal growth factor receptor signaling pathway"/>
    <property type="evidence" value="ECO:0000314"/>
    <property type="project" value="MGI"/>
</dbReference>
<dbReference type="GO" id="GO:0007507">
    <property type="term" value="P:heart development"/>
    <property type="evidence" value="ECO:0000315"/>
    <property type="project" value="MGI"/>
</dbReference>
<dbReference type="GO" id="GO:0008286">
    <property type="term" value="P:insulin receptor signaling pathway"/>
    <property type="evidence" value="ECO:0000315"/>
    <property type="project" value="MGI"/>
</dbReference>
<dbReference type="GO" id="GO:0048009">
    <property type="term" value="P:insulin-like growth factor receptor signaling pathway"/>
    <property type="evidence" value="ECO:0000316"/>
    <property type="project" value="MGI"/>
</dbReference>
<dbReference type="GO" id="GO:0035556">
    <property type="term" value="P:intracellular signal transduction"/>
    <property type="evidence" value="ECO:0007669"/>
    <property type="project" value="InterPro"/>
</dbReference>
<dbReference type="GO" id="GO:0043066">
    <property type="term" value="P:negative regulation of apoptotic process"/>
    <property type="evidence" value="ECO:0007669"/>
    <property type="project" value="Ensembl"/>
</dbReference>
<dbReference type="GO" id="GO:0045892">
    <property type="term" value="P:negative regulation of DNA-templated transcription"/>
    <property type="evidence" value="ECO:0007669"/>
    <property type="project" value="Ensembl"/>
</dbReference>
<dbReference type="GO" id="GO:0045893">
    <property type="term" value="P:positive regulation of DNA-templated transcription"/>
    <property type="evidence" value="ECO:0007669"/>
    <property type="project" value="Ensembl"/>
</dbReference>
<dbReference type="GO" id="GO:0070374">
    <property type="term" value="P:positive regulation of ERK1 and ERK2 cascade"/>
    <property type="evidence" value="ECO:0007669"/>
    <property type="project" value="Ensembl"/>
</dbReference>
<dbReference type="GO" id="GO:0043410">
    <property type="term" value="P:positive regulation of MAPK cascade"/>
    <property type="evidence" value="ECO:0000315"/>
    <property type="project" value="MGI"/>
</dbReference>
<dbReference type="GO" id="GO:0042127">
    <property type="term" value="P:regulation of cell population proliferation"/>
    <property type="evidence" value="ECO:0000315"/>
    <property type="project" value="MGI"/>
</dbReference>
<dbReference type="CDD" id="cd01209">
    <property type="entry name" value="PTB_Shc"/>
    <property type="match status" value="1"/>
</dbReference>
<dbReference type="CDD" id="cd09925">
    <property type="entry name" value="SH2_SHC"/>
    <property type="match status" value="1"/>
</dbReference>
<dbReference type="FunFam" id="2.30.29.30:FF:000036">
    <property type="entry name" value="SHC-transforming protein 1 isoform 3"/>
    <property type="match status" value="1"/>
</dbReference>
<dbReference type="FunFam" id="3.30.505.10:FF:000005">
    <property type="entry name" value="SHC-transforming protein 1 isoform 3"/>
    <property type="match status" value="1"/>
</dbReference>
<dbReference type="Gene3D" id="2.30.29.30">
    <property type="entry name" value="Pleckstrin-homology domain (PH domain)/Phosphotyrosine-binding domain (PTB)"/>
    <property type="match status" value="1"/>
</dbReference>
<dbReference type="Gene3D" id="3.30.505.10">
    <property type="entry name" value="SH2 domain"/>
    <property type="match status" value="1"/>
</dbReference>
<dbReference type="InterPro" id="IPR051235">
    <property type="entry name" value="CEP152/SHC-Transforming"/>
</dbReference>
<dbReference type="InterPro" id="IPR011993">
    <property type="entry name" value="PH-like_dom_sf"/>
</dbReference>
<dbReference type="InterPro" id="IPR006019">
    <property type="entry name" value="PID_Shc-like"/>
</dbReference>
<dbReference type="InterPro" id="IPR006020">
    <property type="entry name" value="PTB/PI_dom"/>
</dbReference>
<dbReference type="InterPro" id="IPR000980">
    <property type="entry name" value="SH2"/>
</dbReference>
<dbReference type="InterPro" id="IPR036860">
    <property type="entry name" value="SH2_dom_sf"/>
</dbReference>
<dbReference type="InterPro" id="IPR035676">
    <property type="entry name" value="SHC_SH2"/>
</dbReference>
<dbReference type="PANTHER" id="PTHR10337">
    <property type="entry name" value="SHC TRANSFORMING PROTEIN"/>
    <property type="match status" value="1"/>
</dbReference>
<dbReference type="PANTHER" id="PTHR10337:SF2">
    <property type="entry name" value="SHC-TRANSFORMING PROTEIN 1"/>
    <property type="match status" value="1"/>
</dbReference>
<dbReference type="Pfam" id="PF00640">
    <property type="entry name" value="PID"/>
    <property type="match status" value="1"/>
</dbReference>
<dbReference type="Pfam" id="PF00017">
    <property type="entry name" value="SH2"/>
    <property type="match status" value="1"/>
</dbReference>
<dbReference type="PRINTS" id="PR00401">
    <property type="entry name" value="SH2DOMAIN"/>
</dbReference>
<dbReference type="PRINTS" id="PR00629">
    <property type="entry name" value="SHCPIDOMAIN"/>
</dbReference>
<dbReference type="SMART" id="SM00462">
    <property type="entry name" value="PTB"/>
    <property type="match status" value="1"/>
</dbReference>
<dbReference type="SMART" id="SM00252">
    <property type="entry name" value="SH2"/>
    <property type="match status" value="1"/>
</dbReference>
<dbReference type="SUPFAM" id="SSF50729">
    <property type="entry name" value="PH domain-like"/>
    <property type="match status" value="1"/>
</dbReference>
<dbReference type="SUPFAM" id="SSF55550">
    <property type="entry name" value="SH2 domain"/>
    <property type="match status" value="1"/>
</dbReference>
<dbReference type="PROSITE" id="PS01179">
    <property type="entry name" value="PID"/>
    <property type="match status" value="1"/>
</dbReference>
<dbReference type="PROSITE" id="PS50001">
    <property type="entry name" value="SH2"/>
    <property type="match status" value="1"/>
</dbReference>
<gene>
    <name type="primary">Shc1</name>
    <name type="synonym">Shc</name>
    <name type="synonym">ShcA</name>
</gene>
<sequence>MDLLPPKPKYNPLRNESLSSLEEGASGSTPPEELPSPSASSLGPILPPLPGDDSPTTLCSFFPRMSNLKLANPAGGRLGPKGEPGKAAEDGEGSAGAALRDSGLLPLLQDMNKLSGGGGRRTRVEGGQLGGEEWTRHGSFVNKPTRGWLHPNDKVMGPGVSYLVRYMGCVEVLQSMRALDFNTRTQVTREAISLVCEAVPGAKGATRRRKPCSRPLSSILGRSNLKFAGMPITLTVSTSSLNLMAADCKQIIANHHMQSISFASGGDPDTAEYVAYVAKDPVNQRACHILECPEGLAQDVISTIGQAFELRFKQYLRNPPKLVTPHDRMAGFDGSAWDEEEEEPPDHQYYNDFPGKEPPLGGVVDMRLREGAARPTLPSAQMSSHLGATLPIGQHAAGDHEVRKQMLPPPPCPGRELFDDPSYVNIQNLDKARQAGGGAGPPNPSLNGSAPRDLFDMKPFEDALRVPPPPQSMSMAEQLQGEPWFHGKLSRREAEALLQLNGDFLVRESTTTPGQYVLTGLQSGQPKHLLLVDPEGVVRTKDHRFESVSHLISYHMDNHLPIISAGSELCLQQPVDRKV</sequence>
<accession>P98083</accession>
<accession>Q3U2Q7</accession>
<accession>Q8BFY3</accession>
<accession>Q8K4C6</accession>
<accession>Q8K4C7</accession>
<comment type="function">
    <text evidence="1 12 15">Signaling adapter that couples activated growth factor receptors to signaling pathways. Participates in signaling downstream of the angiopoietin receptor TEK/TIE2, and plays a role in the regulation of endothelial cell migration and sprouting angiogenesis (By similarity). Participates in a signaling cascade initiated by activated KIT and KITLG/SCF. Isoform p47Shc and isoform p52Shc, once phosphorylated, couple activated receptor kinases to Ras via the recruitment of the GRB2/SOS complex and are implicated in the cytoplasmic propagation of mitogenic signals. Isoform p47Shc and isoform p52 may thus function as initiators of the Ras signaling cascade in various non-neuronal systems. Isoform p66Shc does not mediate Ras activation, but is involved in signal transduction pathways that regulate the cellular response to oxidative stress and life span. Isoform p66Shc acts as a downstream target of the tumor suppressor p53 and is indispensable for the ability of stress-activated p53 to induce elevation of intracellular oxidants, cytochrome c release and apoptosis. The expression of isoform p66Shc has been correlated with life span.</text>
</comment>
<comment type="subunit">
    <text evidence="2 3 7 8 9 10 11 13 14 16 17 18 19 20 22">Interacts with CPNE3; this interaction may mediate the binding of CPNE3 with ERBB2 (By similarity). Interacts with the NPXY motif of tyrosine-phosphorylated IGF1R and INSR in vitro via the PID domain. Once activated, binds to GRB2. Interacts with tyrosine-phosphorylated DDR2 and CD3T. Interacts with the N-terminal region of APS. Interacts with GRB7 and KIT (By similarity). Interacts with PTK2/FAK1 (By similarity). Interacts with phosphorylated LRP1 and IRS4. Interacts with FLT4 (tyrosine-phosphorylated) (By similarity). Interacts with PDGFRB (tyrosine-phosphorylated). Interacts with ERBB4 (By similarity). Interacts with TEK/TIE2 (tyrosine-phosphorylated) (By similarity). Interacts with ALK, GAB2, TRIM31, INPP5D/SHIP1 and INPPL1/SHIP2. Interacts with PTPN6/SHP (tyrosine phosphorylated). Identified in a complex containing FGFR4, NCAM1, CDH2, PLCG1, FRS2, SRC, SHC1, GAP43 and CTTN. Interacts with EPHB1 and GRB2; activates the MAPK/ERK cascade to regulate cell migration. Interacts with the Trk receptors NTRK1, NTRK2 and NTRK3; in a phosphotyrosine-dependent manner. Interacts with CEACAM1; this interaction is CEACAM1-phosphorylation-dependent and mediates interaction with EGFR or INSR resulting in decrease coupling of SHC1 to the MAPK3/ERK1-MAPK1/ERK2 pathway (By similarity) (PubMed:15467833). Interacts (via PID domain) with PEAK1 (when phosphorylated at 'Tyr-1177') (By similarity). Found in a complex with PPP1CA, PPP1CC, SHC1 and PEAK1 (By similarity).</text>
</comment>
<comment type="interaction">
    <interactant intactId="EBI-300201">
        <id>P98083</id>
    </interactant>
    <interactant intactId="EBI-644529">
        <id>P0DMN7</id>
        <label>Amd1</label>
    </interactant>
    <organismsDiffer>false</organismsDiffer>
    <experiments>7</experiments>
</comment>
<comment type="interaction">
    <interactant intactId="EBI-300201">
        <id>P98083</id>
    </interactant>
    <interactant intactId="EBI-1688">
        <id>Q60631</id>
        <label>Grb2</label>
    </interactant>
    <organismsDiffer>false</organismsDiffer>
    <experiments>8</experiments>
</comment>
<comment type="interaction">
    <interactant intactId="EBI-300201">
        <id>P98083</id>
    </interactant>
    <interactant intactId="EBI-644633">
        <id>Q9JKF1</id>
        <label>Iqgap1</label>
    </interactant>
    <organismsDiffer>false</organismsDiffer>
    <experiments>5</experiments>
</comment>
<comment type="interaction">
    <interactant intactId="EBI-300201">
        <id>P98083</id>
    </interactant>
    <interactant intactId="EBI-2642957">
        <id>P35831</id>
        <label>Ptpn12</label>
    </interactant>
    <organismsDiffer>false</organismsDiffer>
    <experiments>2</experiments>
</comment>
<comment type="interaction">
    <interactant intactId="EBI-300201">
        <id>P98083</id>
    </interactant>
    <interactant intactId="EBI-644352">
        <id>Q9Z179</id>
        <label>Shcbp1</label>
    </interactant>
    <organismsDiffer>false</organismsDiffer>
    <experiments>5</experiments>
</comment>
<comment type="interaction">
    <interactant intactId="EBI-7533258">
        <id>P98083-1</id>
    </interactant>
    <interactant intactId="EBI-7533258">
        <id>P98083-1</id>
        <label>Shc1</label>
    </interactant>
    <organismsDiffer>false</organismsDiffer>
    <experiments>4</experiments>
</comment>
<comment type="interaction">
    <interactant intactId="EBI-7533258">
        <id>P98083-1</id>
    </interactant>
    <interactant intactId="EBI-2899332">
        <id>Q62312</id>
        <label>Tgfbr2</label>
    </interactant>
    <organismsDiffer>false</organismsDiffer>
    <experiments>2</experiments>
</comment>
<comment type="interaction">
    <interactant intactId="EBI-1019301">
        <id>P98083-2</id>
    </interactant>
    <interactant intactId="EBI-2899393">
        <id>Q64729</id>
        <label>Tgfbr1</label>
    </interactant>
    <organismsDiffer>false</organismsDiffer>
    <experiments>7</experiments>
</comment>
<comment type="interaction">
    <interactant intactId="EBI-1019301">
        <id>P98083-2</id>
    </interactant>
    <interactant intactId="EBI-2899332">
        <id>Q62312</id>
        <label>Tgfbr2</label>
    </interactant>
    <organismsDiffer>false</organismsDiffer>
    <experiments>3</experiments>
</comment>
<comment type="subcellular location">
    <subcellularLocation>
        <location evidence="1">Cytoplasm</location>
    </subcellularLocation>
    <subcellularLocation>
        <location evidence="2">Cell junction</location>
        <location evidence="2">Focal adhesion</location>
    </subcellularLocation>
</comment>
<comment type="subcellular location">
    <molecule>Isoform p47Shc</molecule>
    <subcellularLocation>
        <location evidence="1">Mitochondrion matrix</location>
    </subcellularLocation>
    <text evidence="1">Targeting of isoform p47Shc to mitochondria is mediated by its first 32 amino acids, which behave as a bona fide mitochondrial targeting sequence. Isoform p52Shc and isoform p66Shc, that contain the same sequence but more internally located, display a different subcellular localization (By similarity).</text>
</comment>
<comment type="subcellular location">
    <molecule>Isoform p66Shc</molecule>
    <subcellularLocation>
        <location evidence="15">Mitochondrion</location>
    </subcellularLocation>
    <text>In case of oxidative conditions, phosphorylation at 'Ser-36' of isoform p66Shc, leads to mitochondrial accumulation.</text>
</comment>
<comment type="alternative products">
    <event type="alternative splicing"/>
    <event type="alternative initiation"/>
    <isoform>
        <id>P98083-1</id>
        <name>p66Shc</name>
        <name>p66</name>
        <sequence type="displayed"/>
    </isoform>
    <isoform>
        <id>P98083-2</id>
        <name>p52Shc</name>
        <name>p52</name>
        <sequence type="described" ref="VSP_018791"/>
    </isoform>
    <isoform>
        <id>P98083-3</id>
        <name>p47Shc</name>
        <name>p47</name>
        <sequence type="described" ref="VSP_018792"/>
    </isoform>
    <text>In human, it is alternative promoter usage that produces such isoforms.</text>
</comment>
<comment type="tissue specificity">
    <text>Widely expressed. Expressed in neural stem cells but absent in mature neurons.</text>
</comment>
<comment type="domain">
    <text>In response to a variety of growth factors, isoform p47Shc and isoform p52 bind to phosphorylated receptors through their phosphotyrosine binding (PID) and/or SH2 domains. The PID and SH2 domains bind to specific phosphorylated tyrosine residues in the Asn-Pro-Xaa-Tyr(P) motif. Isoform p47Shc and isoform p52Shc are in turn phosphorylated on three tyrosine residues within the extended proline-rich domain. These phosphotyrosines act as docking site for GRB2 and thereby are involved in Ras activation.</text>
</comment>
<comment type="PTM">
    <text evidence="1 8 21">Phosphorylated in response to FLT4 signaling (By similarity). Tyrosine phosphorylated by ligand-activated PDGFRB (By similarity). May be tyrosine phosphorylated by activated PTK2/FAK1 (By similarity). Tyrosine phosphorylated by TEK/TIE2 (By similarity). Tyrosine phosphorylated by activated PTK2B/PYK2 (By similarity). Dephosphorylation by PTPN2 may regulate interaction with GRB2 (By similarity). Phosphorylated by activated epidermal growth factor receptor. Phosphorylated in response to KIT signaling. Isoform p47Shc and isoform p52Shc are phosphorylated on tyrosine residues of the Pro-rich domain. Isoform p66Shc is phosphorylated on Ser-36 by PRKCB upon treatment with insulin, hydrogen peroxide or irradiation with ultraviolet light. FLT3 signaling promotes tyrosine phosphorylation of isoform p47Shc and isoform p52Shc. Also tyrosine phosphorylated by ligand-activated ALK.</text>
</comment>
<comment type="miscellaneous">
    <molecule>Isoform p52Shc</molecule>
    <text evidence="26">Produced by alternative splicing.</text>
</comment>
<comment type="miscellaneous">
    <molecule>Isoform p47Shc</molecule>
    <text evidence="26">Produced by alternative initiation at Met-46 of isoform p52.</text>
</comment>
<reference key="1">
    <citation type="submission" date="2001-05" db="EMBL/GenBank/DDBJ databases">
        <authorList>
            <person name="Blaikie P.A."/>
            <person name="Yajnik V."/>
            <person name="Margolis B."/>
        </authorList>
    </citation>
    <scope>NUCLEOTIDE SEQUENCE [GENOMIC DNA] (ISOFORM P66SHC)</scope>
</reference>
<reference key="2">
    <citation type="journal article" date="1994" name="J. Biol. Chem.">
        <title>A region in Shc distinct from the SH2 domain can bind tyrosine-phosphorylated growth factor receptors.</title>
        <authorList>
            <person name="Blaikie P.A."/>
            <person name="Immanuel D."/>
            <person name="Wu J."/>
            <person name="Li N."/>
            <person name="Yajnik V."/>
            <person name="Margolis B."/>
        </authorList>
    </citation>
    <scope>NUCLEOTIDE SEQUENCE [MRNA] (ISOFORM P52SHC)</scope>
</reference>
<reference key="3">
    <citation type="journal article" date="2005" name="Science">
        <title>The transcriptional landscape of the mammalian genome.</title>
        <authorList>
            <person name="Carninci P."/>
            <person name="Kasukawa T."/>
            <person name="Katayama S."/>
            <person name="Gough J."/>
            <person name="Frith M.C."/>
            <person name="Maeda N."/>
            <person name="Oyama R."/>
            <person name="Ravasi T."/>
            <person name="Lenhard B."/>
            <person name="Wells C."/>
            <person name="Kodzius R."/>
            <person name="Shimokawa K."/>
            <person name="Bajic V.B."/>
            <person name="Brenner S.E."/>
            <person name="Batalov S."/>
            <person name="Forrest A.R."/>
            <person name="Zavolan M."/>
            <person name="Davis M.J."/>
            <person name="Wilming L.G."/>
            <person name="Aidinis V."/>
            <person name="Allen J.E."/>
            <person name="Ambesi-Impiombato A."/>
            <person name="Apweiler R."/>
            <person name="Aturaliya R.N."/>
            <person name="Bailey T.L."/>
            <person name="Bansal M."/>
            <person name="Baxter L."/>
            <person name="Beisel K.W."/>
            <person name="Bersano T."/>
            <person name="Bono H."/>
            <person name="Chalk A.M."/>
            <person name="Chiu K.P."/>
            <person name="Choudhary V."/>
            <person name="Christoffels A."/>
            <person name="Clutterbuck D.R."/>
            <person name="Crowe M.L."/>
            <person name="Dalla E."/>
            <person name="Dalrymple B.P."/>
            <person name="de Bono B."/>
            <person name="Della Gatta G."/>
            <person name="di Bernardo D."/>
            <person name="Down T."/>
            <person name="Engstrom P."/>
            <person name="Fagiolini M."/>
            <person name="Faulkner G."/>
            <person name="Fletcher C.F."/>
            <person name="Fukushima T."/>
            <person name="Furuno M."/>
            <person name="Futaki S."/>
            <person name="Gariboldi M."/>
            <person name="Georgii-Hemming P."/>
            <person name="Gingeras T.R."/>
            <person name="Gojobori T."/>
            <person name="Green R.E."/>
            <person name="Gustincich S."/>
            <person name="Harbers M."/>
            <person name="Hayashi Y."/>
            <person name="Hensch T.K."/>
            <person name="Hirokawa N."/>
            <person name="Hill D."/>
            <person name="Huminiecki L."/>
            <person name="Iacono M."/>
            <person name="Ikeo K."/>
            <person name="Iwama A."/>
            <person name="Ishikawa T."/>
            <person name="Jakt M."/>
            <person name="Kanapin A."/>
            <person name="Katoh M."/>
            <person name="Kawasawa Y."/>
            <person name="Kelso J."/>
            <person name="Kitamura H."/>
            <person name="Kitano H."/>
            <person name="Kollias G."/>
            <person name="Krishnan S.P."/>
            <person name="Kruger A."/>
            <person name="Kummerfeld S.K."/>
            <person name="Kurochkin I.V."/>
            <person name="Lareau L.F."/>
            <person name="Lazarevic D."/>
            <person name="Lipovich L."/>
            <person name="Liu J."/>
            <person name="Liuni S."/>
            <person name="McWilliam S."/>
            <person name="Madan Babu M."/>
            <person name="Madera M."/>
            <person name="Marchionni L."/>
            <person name="Matsuda H."/>
            <person name="Matsuzawa S."/>
            <person name="Miki H."/>
            <person name="Mignone F."/>
            <person name="Miyake S."/>
            <person name="Morris K."/>
            <person name="Mottagui-Tabar S."/>
            <person name="Mulder N."/>
            <person name="Nakano N."/>
            <person name="Nakauchi H."/>
            <person name="Ng P."/>
            <person name="Nilsson R."/>
            <person name="Nishiguchi S."/>
            <person name="Nishikawa S."/>
            <person name="Nori F."/>
            <person name="Ohara O."/>
            <person name="Okazaki Y."/>
            <person name="Orlando V."/>
            <person name="Pang K.C."/>
            <person name="Pavan W.J."/>
            <person name="Pavesi G."/>
            <person name="Pesole G."/>
            <person name="Petrovsky N."/>
            <person name="Piazza S."/>
            <person name="Reed J."/>
            <person name="Reid J.F."/>
            <person name="Ring B.Z."/>
            <person name="Ringwald M."/>
            <person name="Rost B."/>
            <person name="Ruan Y."/>
            <person name="Salzberg S.L."/>
            <person name="Sandelin A."/>
            <person name="Schneider C."/>
            <person name="Schoenbach C."/>
            <person name="Sekiguchi K."/>
            <person name="Semple C.A."/>
            <person name="Seno S."/>
            <person name="Sessa L."/>
            <person name="Sheng Y."/>
            <person name="Shibata Y."/>
            <person name="Shimada H."/>
            <person name="Shimada K."/>
            <person name="Silva D."/>
            <person name="Sinclair B."/>
            <person name="Sperling S."/>
            <person name="Stupka E."/>
            <person name="Sugiura K."/>
            <person name="Sultana R."/>
            <person name="Takenaka Y."/>
            <person name="Taki K."/>
            <person name="Tammoja K."/>
            <person name="Tan S.L."/>
            <person name="Tang S."/>
            <person name="Taylor M.S."/>
            <person name="Tegner J."/>
            <person name="Teichmann S.A."/>
            <person name="Ueda H.R."/>
            <person name="van Nimwegen E."/>
            <person name="Verardo R."/>
            <person name="Wei C.L."/>
            <person name="Yagi K."/>
            <person name="Yamanishi H."/>
            <person name="Zabarovsky E."/>
            <person name="Zhu S."/>
            <person name="Zimmer A."/>
            <person name="Hide W."/>
            <person name="Bult C."/>
            <person name="Grimmond S.M."/>
            <person name="Teasdale R.D."/>
            <person name="Liu E.T."/>
            <person name="Brusic V."/>
            <person name="Quackenbush J."/>
            <person name="Wahlestedt C."/>
            <person name="Mattick J.S."/>
            <person name="Hume D.A."/>
            <person name="Kai C."/>
            <person name="Sasaki D."/>
            <person name="Tomaru Y."/>
            <person name="Fukuda S."/>
            <person name="Kanamori-Katayama M."/>
            <person name="Suzuki M."/>
            <person name="Aoki J."/>
            <person name="Arakawa T."/>
            <person name="Iida J."/>
            <person name="Imamura K."/>
            <person name="Itoh M."/>
            <person name="Kato T."/>
            <person name="Kawaji H."/>
            <person name="Kawagashira N."/>
            <person name="Kawashima T."/>
            <person name="Kojima M."/>
            <person name="Kondo S."/>
            <person name="Konno H."/>
            <person name="Nakano K."/>
            <person name="Ninomiya N."/>
            <person name="Nishio T."/>
            <person name="Okada M."/>
            <person name="Plessy C."/>
            <person name="Shibata K."/>
            <person name="Shiraki T."/>
            <person name="Suzuki S."/>
            <person name="Tagami M."/>
            <person name="Waki K."/>
            <person name="Watahiki A."/>
            <person name="Okamura-Oho Y."/>
            <person name="Suzuki H."/>
            <person name="Kawai J."/>
            <person name="Hayashizaki Y."/>
        </authorList>
    </citation>
    <scope>NUCLEOTIDE SEQUENCE [LARGE SCALE MRNA] (ISOFORMS P52SHC AND P66SHC)</scope>
    <source>
        <strain>C57BL/6J</strain>
        <strain>NOD</strain>
    </source>
</reference>
<reference key="4">
    <citation type="journal article" date="2004" name="Genome Res.">
        <title>The status, quality, and expansion of the NIH full-length cDNA project: the Mammalian Gene Collection (MGC).</title>
        <authorList>
            <consortium name="The MGC Project Team"/>
        </authorList>
    </citation>
    <scope>NUCLEOTIDE SEQUENCE [LARGE SCALE MRNA] (ISOFORM P52SHC)</scope>
    <source>
        <strain>FVB/N</strain>
        <tissue>Colon</tissue>
    </source>
</reference>
<reference key="5">
    <citation type="journal article" date="2002" name="J. Biol. Chem.">
        <title>The p66Shc longevity gene is silenced through epigenetic modifications of an alternative promoter.</title>
        <authorList>
            <person name="Ventura A."/>
            <person name="Luzi L."/>
            <person name="Pacini S."/>
            <person name="Baldari C.T."/>
            <person name="Pelicci P.-G."/>
        </authorList>
    </citation>
    <scope>NUCLEOTIDE SEQUENCE [GENOMIC DNA] OF 1-165 (ISOFORMS P66SHC AND P52SHC)</scope>
    <source>
        <strain>129/SvJ</strain>
    </source>
</reference>
<reference key="6">
    <citation type="journal article" date="1996" name="Genes Dev.">
        <title>p150Ship, a signal transduction molecule with inositol polyphosphate-5-phosphatase activity.</title>
        <authorList>
            <person name="Lioubin M.N."/>
            <person name="Algate P.A."/>
            <person name="Tsai S."/>
            <person name="Carlberg K."/>
            <person name="Aebersold A."/>
            <person name="Rohrschneider L.R."/>
        </authorList>
    </citation>
    <scope>INTERACTION WITH INPP5D</scope>
</reference>
<reference key="7">
    <citation type="journal article" date="1996" name="Proc. Natl. Acad. Sci. U.S.A.">
        <title>The 145-kDa protein induced to associate with Shc by multiple cytokines is an inositol tetraphosphate and phosphatidylinositol 3,4,5-triphosphate 5-phosphatase.</title>
        <authorList>
            <person name="Damen J.E."/>
            <person name="Liu L."/>
            <person name="Rosten P."/>
            <person name="Humphries R.K."/>
            <person name="Jefferson A.B."/>
            <person name="Majerus P.W."/>
            <person name="Krystal G."/>
        </authorList>
    </citation>
    <scope>INTERACTION WITH INPP5D</scope>
</reference>
<reference key="8">
    <citation type="journal article" date="1997" name="Endocrinology">
        <title>Insulin stimulates the phosphorylation of the 66- and 52-kilodalton Shc isoforms by distinct pathways.</title>
        <authorList>
            <person name="Kao A.W."/>
            <person name="Waters S.B."/>
            <person name="Okada S."/>
            <person name="Pessin J.E."/>
        </authorList>
    </citation>
    <scope>PHOSPHORYLATION AT SER-36</scope>
</reference>
<reference key="9">
    <citation type="journal article" date="1997" name="J. Biol. Chem.">
        <title>The Src homology 2 (SH2) domain of SH2-containing inositol phosphatase (SHIP) is essential for tyrosine phosphorylation of SHIP, its association with Shc, and its induction of apoptosis.</title>
        <authorList>
            <person name="Liu L."/>
            <person name="Damen J.E."/>
            <person name="Hughes M.R."/>
            <person name="Babic I."/>
            <person name="Jirik F.R."/>
            <person name="Krystal G."/>
        </authorList>
    </citation>
    <scope>INTERACTION WITH INPP5D</scope>
</reference>
<reference key="10">
    <citation type="journal article" date="1997" name="J. Biol. Chem.">
        <title>Shc interaction with Src homology 2 domain containing inositol phosphatase (SHIP) in vivo requires the Shc-phosphotyrosine binding domain and two specific phosphotyrosines on SHIP.</title>
        <authorList>
            <person name="Lamkin T.D."/>
            <person name="Walk S.F."/>
            <person name="Liu L."/>
            <person name="Damen J.E."/>
            <person name="Krystal G."/>
            <person name="Ravichandran K.S."/>
        </authorList>
    </citation>
    <scope>INTERACTION WITH INPPL1</scope>
</reference>
<reference key="11">
    <citation type="journal article" date="1998" name="Mol. Cell">
        <title>Cloning of p97/Gab2, the major SHP2-binding protein in hematopoietic cells, reveals a novel pathway for cytokine-induced gene activation.</title>
        <authorList>
            <person name="Gu H."/>
            <person name="Pratt J.C."/>
            <person name="Burakoff S.J."/>
            <person name="Neel B.G."/>
        </authorList>
    </citation>
    <scope>INTERACTION WITH GAB2</scope>
</reference>
<reference key="12">
    <citation type="journal article" date="1998" name="Mol. Immunol.">
        <title>Role of SHIP in FcgammaRIIb-mediated inhibition of Ras activation in B cells.</title>
        <authorList>
            <person name="Tridandapani S."/>
            <person name="Phee H."/>
            <person name="Shivakumar L."/>
            <person name="Kelley T.W."/>
            <person name="Coggeshall K.M."/>
        </authorList>
    </citation>
    <scope>INTERACTION WITH INPP5D</scope>
</reference>
<reference key="13">
    <citation type="journal article" date="1999" name="Blood">
        <title>A novel spliced form of SH2-containing inositol phosphatase is expressed during myeloid development.</title>
        <authorList>
            <person name="Lucas D.M."/>
            <person name="Rohrschneider L.R."/>
        </authorList>
    </citation>
    <scope>INTERACTION WITH INPP5D</scope>
</reference>
<reference key="14">
    <citation type="journal article" date="1999" name="J. Leukoc. Biol.">
        <title>Flt3 signaling involves tyrosyl-phosphorylation of SHP-2 and SHIP and their association with Grb2 and Shc in Baf3/Flt3 cells.</title>
        <authorList>
            <person name="Zhang S."/>
            <person name="Mantel C."/>
            <person name="Broxmeyer H.E."/>
        </authorList>
    </citation>
    <scope>PHOSPHORYLATION IN RESPONSE TO FLT3 SIGNALING</scope>
    <scope>INTERACTION WITH GRB2 AND PTPN6/SHP</scope>
</reference>
<reference key="15">
    <citation type="journal article" date="2001" name="Nat. Cell Biol.">
        <title>N-CAM modulates tumour-cell adhesion to matrix by inducing FGF-receptor signalling.</title>
        <authorList>
            <person name="Cavallaro U."/>
            <person name="Niedermeyer J."/>
            <person name="Fuxa M."/>
            <person name="Christofori G."/>
        </authorList>
    </citation>
    <scope>IDENTIFICATION IN A COMPLEX WITH NCAM1; CDH2; PLCG1; FRS2; SRC; SHC1; FGFR4 AND CTTN</scope>
</reference>
<reference key="16">
    <citation type="journal article" date="2002" name="Neuron">
        <title>Mechanism of TrkB-mediated hippocampal long-term potentiation.</title>
        <authorList>
            <person name="Minichiello L."/>
            <person name="Calella A.M."/>
            <person name="Medina D.L."/>
            <person name="Bonhoeffer T."/>
            <person name="Klein R."/>
            <person name="Korte M."/>
        </authorList>
    </citation>
    <scope>INTERACTION WITH NTRK2</scope>
</reference>
<reference key="17">
    <citation type="journal article" date="2003" name="J. Cell Biol.">
        <title>EphB1 recruits c-Src and p52Shc to activate MAPK/ERK and promote chemotaxis.</title>
        <authorList>
            <person name="Vindis C."/>
            <person name="Cerretti D.P."/>
            <person name="Daniel T.O."/>
            <person name="Huynh-Do U."/>
        </authorList>
    </citation>
    <scope>INTERACTION WITH EPHB1 AND GRB2</scope>
</reference>
<reference key="18">
    <citation type="journal article" date="2003" name="Proc. Natl. Acad. Sci. U.S.A.">
        <title>Deletion of the p66Shc longevity gene reduces systemic and tissue oxidative stress, vascular cell apoptosis, and early atherogenesis in mice fed a high-fat diet.</title>
        <authorList>
            <person name="Napoli C."/>
            <person name="Martin-Padura I."/>
            <person name="de Nigris F."/>
            <person name="Giorgio M."/>
            <person name="Mansueto G."/>
            <person name="Somma P."/>
            <person name="Condorelli M."/>
            <person name="Sica G."/>
            <person name="De Rosa G."/>
            <person name="Pelicci P.-G."/>
        </authorList>
    </citation>
    <scope>FUNCTION</scope>
</reference>
<reference key="19">
    <citation type="journal article" date="2004" name="J. Clin. Invest.">
        <title>CEACAM1 modulates epidermal growth factor receptor--mediated cell proliferation.</title>
        <authorList>
            <person name="Abou-Rjaily G.A."/>
            <person name="Lee S.J."/>
            <person name="May D."/>
            <person name="Al-Share Q.Y."/>
            <person name="Deangelis A.M."/>
            <person name="Ruch R.J."/>
            <person name="Neumaier M."/>
            <person name="Kalthoff H."/>
            <person name="Lin S.H."/>
            <person name="Najjar S.M."/>
        </authorList>
    </citation>
    <scope>INTERACTION WITH CEACAM1</scope>
</reference>
<reference key="20">
    <citation type="journal article" date="2005" name="Nat. Biotechnol.">
        <title>Immunoaffinity profiling of tyrosine phosphorylation in cancer cells.</title>
        <authorList>
            <person name="Rush J."/>
            <person name="Moritz A."/>
            <person name="Lee K.A."/>
            <person name="Guo A."/>
            <person name="Goss V.L."/>
            <person name="Spek E.J."/>
            <person name="Zhang H."/>
            <person name="Zha X.-M."/>
            <person name="Polakiewicz R.D."/>
            <person name="Comb M.J."/>
        </authorList>
    </citation>
    <scope>IDENTIFICATION BY MASS SPECTROMETRY [LARGE SCALE ANALYSIS]</scope>
</reference>
<reference key="21">
    <citation type="journal article" date="2007" name="J. Immunol.">
        <title>Quantitative time-resolved phosphoproteomic analysis of mast cell signaling.</title>
        <authorList>
            <person name="Cao L."/>
            <person name="Yu K."/>
            <person name="Banh C."/>
            <person name="Nguyen V."/>
            <person name="Ritz A."/>
            <person name="Raphael B.J."/>
            <person name="Kawakami Y."/>
            <person name="Kawakami T."/>
            <person name="Salomon A.R."/>
        </authorList>
    </citation>
    <scope>PHOSPHORYLATION [LARGE SCALE ANALYSIS] AT TYR-423</scope>
    <scope>IDENTIFICATION BY MASS SPECTROMETRY [LARGE SCALE ANALYSIS]</scope>
    <source>
        <tissue>Mast cell</tissue>
    </source>
</reference>
<reference key="22">
    <citation type="journal article" date="2007" name="Science">
        <title>Protein kinase C beta and prolyl isomerase 1 regulate mitochondrial effects of the life-span determinant p66Shc.</title>
        <authorList>
            <person name="Pinton P."/>
            <person name="Rimessi A."/>
            <person name="Marchi S."/>
            <person name="Orsini F."/>
            <person name="Migliaccio E."/>
            <person name="Giorgio M."/>
            <person name="Contursi C."/>
            <person name="Minucci S."/>
            <person name="Mantovani F."/>
            <person name="Wieckowski M.R."/>
            <person name="Del Sal G."/>
            <person name="Pelicci P.G."/>
            <person name="Rizzuto R."/>
        </authorList>
    </citation>
    <scope>FUNCTION</scope>
    <scope>SUBCELLULAR LOCATION (ISOFORM P66SHC)</scope>
    <scope>PHOSPHORYLATION AT SER-36</scope>
</reference>
<reference key="23">
    <citation type="journal article" date="2009" name="Biochem. Biophys. Res. Commun.">
        <title>TRIM31 interacts with p52(Shc) and inhibits Src-induced anchorage-independent growth.</title>
        <authorList>
            <person name="Watanabe M."/>
            <person name="Tsukiyama T."/>
            <person name="Hatakeyama S."/>
        </authorList>
    </citation>
    <scope>INTERACTION WITH TRIM31</scope>
</reference>
<reference key="24">
    <citation type="journal article" date="2009" name="Immunity">
        <title>The phagosomal proteome in interferon-gamma-activated macrophages.</title>
        <authorList>
            <person name="Trost M."/>
            <person name="English L."/>
            <person name="Lemieux S."/>
            <person name="Courcelles M."/>
            <person name="Desjardins M."/>
            <person name="Thibault P."/>
        </authorList>
    </citation>
    <scope>PHOSPHORYLATION [LARGE SCALE ANALYSIS] AT SER-139 AND TYR-423</scope>
    <scope>IDENTIFICATION BY MASS SPECTROMETRY [LARGE SCALE ANALYSIS]</scope>
</reference>
<reference key="25">
    <citation type="journal article" date="2010" name="Cell">
        <title>A tissue-specific atlas of mouse protein phosphorylation and expression.</title>
        <authorList>
            <person name="Huttlin E.L."/>
            <person name="Jedrychowski M.P."/>
            <person name="Elias J.E."/>
            <person name="Goswami T."/>
            <person name="Rad R."/>
            <person name="Beausoleil S.A."/>
            <person name="Villen J."/>
            <person name="Haas W."/>
            <person name="Sowa M.E."/>
            <person name="Gygi S.P."/>
        </authorList>
    </citation>
    <scope>PHOSPHORYLATION [LARGE SCALE ANALYSIS] AT TYR-423</scope>
    <scope>IDENTIFICATION BY MASS SPECTROMETRY [LARGE SCALE ANALYSIS]</scope>
    <source>
        <tissue>Lung</tissue>
        <tissue>Pancreas</tissue>
        <tissue>Spleen</tissue>
    </source>
</reference>
<reference key="26">
    <citation type="journal article" date="2013" name="Mol. Cell">
        <title>SIRT5-mediated lysine desuccinylation impacts diverse metabolic pathways.</title>
        <authorList>
            <person name="Park J."/>
            <person name="Chen Y."/>
            <person name="Tishkoff D.X."/>
            <person name="Peng C."/>
            <person name="Tan M."/>
            <person name="Dai L."/>
            <person name="Xie Z."/>
            <person name="Zhang Y."/>
            <person name="Zwaans B.M."/>
            <person name="Skinner M.E."/>
            <person name="Lombard D.B."/>
            <person name="Zhao Y."/>
        </authorList>
    </citation>
    <scope>ACETYLATION [LARGE SCALE ANALYSIS] AT LYS-154</scope>
    <scope>IDENTIFICATION BY MASS SPECTROMETRY [LARGE SCALE ANALYSIS]</scope>
    <source>
        <tissue>Embryonic fibroblast</tissue>
    </source>
</reference>
<proteinExistence type="evidence at protein level"/>
<name>SHC1_MOUSE</name>